<comment type="function">
    <text evidence="1 8 9">May function in signaling pathways utilized broadly during fetal development and more selectively in adult tissues and in cells of the lymphohematopoietic system. Could specifically be involved in phospholipid signal transduction (By similarity). Involved in negative regulation of cell growth. Has tumor suppressor properties. Plays a negative regulatory role in the Ras-MAPK pathway.</text>
</comment>
<comment type="catalytic activity">
    <reaction evidence="6">
        <text>L-tyrosyl-[protein] + ATP = O-phospho-L-tyrosyl-[protein] + ADP + H(+)</text>
        <dbReference type="Rhea" id="RHEA:10596"/>
        <dbReference type="Rhea" id="RHEA-COMP:10136"/>
        <dbReference type="Rhea" id="RHEA-COMP:20101"/>
        <dbReference type="ChEBI" id="CHEBI:15378"/>
        <dbReference type="ChEBI" id="CHEBI:30616"/>
        <dbReference type="ChEBI" id="CHEBI:46858"/>
        <dbReference type="ChEBI" id="CHEBI:61978"/>
        <dbReference type="ChEBI" id="CHEBI:456216"/>
        <dbReference type="EC" id="2.7.10.2"/>
    </reaction>
</comment>
<comment type="subunit">
    <text evidence="3">Interacts with the SH3 domain of PLCG1 via its Pro-rich domain.</text>
</comment>
<comment type="subcellular location">
    <subcellularLocation>
        <location evidence="1">Membrane</location>
    </subcellularLocation>
    <subcellularLocation>
        <location evidence="8">Cytoplasm</location>
    </subcellularLocation>
</comment>
<comment type="alternative products">
    <event type="alternative splicing"/>
    <isoform>
        <id>Q99ML2-1</id>
        <name evidence="10">1</name>
        <sequence type="displayed"/>
    </isoform>
    <isoform>
        <id>Q99ML2-2</id>
        <name evidence="8">2</name>
        <sequence type="described" ref="VSP_051664 VSP_051665"/>
    </isoform>
</comment>
<comment type="tissue specificity">
    <text evidence="8">Expressed in whole embryo and all adult tissues examined including liver, kidney, heart, brain, skeletal muscle and intestine. Also detected in various myeloid- and lymphoid-derived cell lines.</text>
</comment>
<comment type="developmental stage">
    <text evidence="8">Expression during embryogenesis increases between 7 dpc and 11 dpc. Levels of expression subsequently decrease and reach a steady-state level by 17 dpc.</text>
</comment>
<comment type="PTM">
    <text evidence="8">Autophosphorylated on tyrosine residues.</text>
</comment>
<comment type="disruption phenotype">
    <text evidence="9">Mice develop spontaneous tumors, including lymphomas and carcinomas at high rates.</text>
</comment>
<comment type="similarity">
    <text evidence="4">Belongs to the protein kinase superfamily. Tyr protein kinase family.</text>
</comment>
<proteinExistence type="evidence at protein level"/>
<reference evidence="12 17" key="1">
    <citation type="journal article" date="2003" name="Oncogene">
        <title>Kos1, a nonreceptor tyrosine kinase that suppresses Ras signaling.</title>
        <authorList>
            <person name="Hoare K."/>
            <person name="Hoare S."/>
            <person name="Smith O.M."/>
            <person name="Kalmaz G."/>
            <person name="Small D."/>
            <person name="May W.S. Jr."/>
        </authorList>
    </citation>
    <scope>NUCLEOTIDE SEQUENCE [GENOMIC DNA / MRNA] (ISOFORM 2)</scope>
    <scope>FUNCTION</scope>
    <scope>AUTOPHOSPHORYLATION</scope>
    <scope>MUTAGENESIS OF LYS-148</scope>
    <scope>SUBCELLULAR LOCATION</scope>
    <scope>TISSUE SPECIFICITY</scope>
    <source>
        <strain evidence="16">129/Sv</strain>
        <tissue>Embryonic stem cell</tissue>
    </source>
</reference>
<reference evidence="12 15" key="2">
    <citation type="submission" date="2000-12" db="EMBL/GenBank/DDBJ databases">
        <title>Cloning of the murine Tnk1 tyrosine kinase and evidence that it plays a role in cell adhesion.</title>
        <authorList>
            <person name="Hoehn G.T."/>
            <person name="Felschow D.M."/>
            <person name="Civin C.I."/>
        </authorList>
    </citation>
    <scope>NUCLEOTIDE SEQUENCE [MRNA] (ISOFORM 1)</scope>
</reference>
<reference evidence="12 13" key="3">
    <citation type="journal article" date="2004" name="Genome Res.">
        <title>The status, quality, and expansion of the NIH full-length cDNA project: the Mammalian Gene Collection (MGC).</title>
        <authorList>
            <consortium name="The MGC Project Team"/>
        </authorList>
    </citation>
    <scope>NUCLEOTIDE SEQUENCE [LARGE SCALE MRNA] (ISOFORM 1)</scope>
    <source>
        <strain evidence="14">FVB/N-3</strain>
        <tissue evidence="13">Mammary gland</tissue>
    </source>
</reference>
<reference key="4">
    <citation type="journal article" date="2005" name="Science">
        <title>The transcriptional landscape of the mammalian genome.</title>
        <authorList>
            <person name="Carninci P."/>
            <person name="Kasukawa T."/>
            <person name="Katayama S."/>
            <person name="Gough J."/>
            <person name="Frith M.C."/>
            <person name="Maeda N."/>
            <person name="Oyama R."/>
            <person name="Ravasi T."/>
            <person name="Lenhard B."/>
            <person name="Wells C."/>
            <person name="Kodzius R."/>
            <person name="Shimokawa K."/>
            <person name="Bajic V.B."/>
            <person name="Brenner S.E."/>
            <person name="Batalov S."/>
            <person name="Forrest A.R."/>
            <person name="Zavolan M."/>
            <person name="Davis M.J."/>
            <person name="Wilming L.G."/>
            <person name="Aidinis V."/>
            <person name="Allen J.E."/>
            <person name="Ambesi-Impiombato A."/>
            <person name="Apweiler R."/>
            <person name="Aturaliya R.N."/>
            <person name="Bailey T.L."/>
            <person name="Bansal M."/>
            <person name="Baxter L."/>
            <person name="Beisel K.W."/>
            <person name="Bersano T."/>
            <person name="Bono H."/>
            <person name="Chalk A.M."/>
            <person name="Chiu K.P."/>
            <person name="Choudhary V."/>
            <person name="Christoffels A."/>
            <person name="Clutterbuck D.R."/>
            <person name="Crowe M.L."/>
            <person name="Dalla E."/>
            <person name="Dalrymple B.P."/>
            <person name="de Bono B."/>
            <person name="Della Gatta G."/>
            <person name="di Bernardo D."/>
            <person name="Down T."/>
            <person name="Engstrom P."/>
            <person name="Fagiolini M."/>
            <person name="Faulkner G."/>
            <person name="Fletcher C.F."/>
            <person name="Fukushima T."/>
            <person name="Furuno M."/>
            <person name="Futaki S."/>
            <person name="Gariboldi M."/>
            <person name="Georgii-Hemming P."/>
            <person name="Gingeras T.R."/>
            <person name="Gojobori T."/>
            <person name="Green R.E."/>
            <person name="Gustincich S."/>
            <person name="Harbers M."/>
            <person name="Hayashi Y."/>
            <person name="Hensch T.K."/>
            <person name="Hirokawa N."/>
            <person name="Hill D."/>
            <person name="Huminiecki L."/>
            <person name="Iacono M."/>
            <person name="Ikeo K."/>
            <person name="Iwama A."/>
            <person name="Ishikawa T."/>
            <person name="Jakt M."/>
            <person name="Kanapin A."/>
            <person name="Katoh M."/>
            <person name="Kawasawa Y."/>
            <person name="Kelso J."/>
            <person name="Kitamura H."/>
            <person name="Kitano H."/>
            <person name="Kollias G."/>
            <person name="Krishnan S.P."/>
            <person name="Kruger A."/>
            <person name="Kummerfeld S.K."/>
            <person name="Kurochkin I.V."/>
            <person name="Lareau L.F."/>
            <person name="Lazarevic D."/>
            <person name="Lipovich L."/>
            <person name="Liu J."/>
            <person name="Liuni S."/>
            <person name="McWilliam S."/>
            <person name="Madan Babu M."/>
            <person name="Madera M."/>
            <person name="Marchionni L."/>
            <person name="Matsuda H."/>
            <person name="Matsuzawa S."/>
            <person name="Miki H."/>
            <person name="Mignone F."/>
            <person name="Miyake S."/>
            <person name="Morris K."/>
            <person name="Mottagui-Tabar S."/>
            <person name="Mulder N."/>
            <person name="Nakano N."/>
            <person name="Nakauchi H."/>
            <person name="Ng P."/>
            <person name="Nilsson R."/>
            <person name="Nishiguchi S."/>
            <person name="Nishikawa S."/>
            <person name="Nori F."/>
            <person name="Ohara O."/>
            <person name="Okazaki Y."/>
            <person name="Orlando V."/>
            <person name="Pang K.C."/>
            <person name="Pavan W.J."/>
            <person name="Pavesi G."/>
            <person name="Pesole G."/>
            <person name="Petrovsky N."/>
            <person name="Piazza S."/>
            <person name="Reed J."/>
            <person name="Reid J.F."/>
            <person name="Ring B.Z."/>
            <person name="Ringwald M."/>
            <person name="Rost B."/>
            <person name="Ruan Y."/>
            <person name="Salzberg S.L."/>
            <person name="Sandelin A."/>
            <person name="Schneider C."/>
            <person name="Schoenbach C."/>
            <person name="Sekiguchi K."/>
            <person name="Semple C.A."/>
            <person name="Seno S."/>
            <person name="Sessa L."/>
            <person name="Sheng Y."/>
            <person name="Shibata Y."/>
            <person name="Shimada H."/>
            <person name="Shimada K."/>
            <person name="Silva D."/>
            <person name="Sinclair B."/>
            <person name="Sperling S."/>
            <person name="Stupka E."/>
            <person name="Sugiura K."/>
            <person name="Sultana R."/>
            <person name="Takenaka Y."/>
            <person name="Taki K."/>
            <person name="Tammoja K."/>
            <person name="Tan S.L."/>
            <person name="Tang S."/>
            <person name="Taylor M.S."/>
            <person name="Tegner J."/>
            <person name="Teichmann S.A."/>
            <person name="Ueda H.R."/>
            <person name="van Nimwegen E."/>
            <person name="Verardo R."/>
            <person name="Wei C.L."/>
            <person name="Yagi K."/>
            <person name="Yamanishi H."/>
            <person name="Zabarovsky E."/>
            <person name="Zhu S."/>
            <person name="Zimmer A."/>
            <person name="Hide W."/>
            <person name="Bult C."/>
            <person name="Grimmond S.M."/>
            <person name="Teasdale R.D."/>
            <person name="Liu E.T."/>
            <person name="Brusic V."/>
            <person name="Quackenbush J."/>
            <person name="Wahlestedt C."/>
            <person name="Mattick J.S."/>
            <person name="Hume D.A."/>
            <person name="Kai C."/>
            <person name="Sasaki D."/>
            <person name="Tomaru Y."/>
            <person name="Fukuda S."/>
            <person name="Kanamori-Katayama M."/>
            <person name="Suzuki M."/>
            <person name="Aoki J."/>
            <person name="Arakawa T."/>
            <person name="Iida J."/>
            <person name="Imamura K."/>
            <person name="Itoh M."/>
            <person name="Kato T."/>
            <person name="Kawaji H."/>
            <person name="Kawagashira N."/>
            <person name="Kawashima T."/>
            <person name="Kojima M."/>
            <person name="Kondo S."/>
            <person name="Konno H."/>
            <person name="Nakano K."/>
            <person name="Ninomiya N."/>
            <person name="Nishio T."/>
            <person name="Okada M."/>
            <person name="Plessy C."/>
            <person name="Shibata K."/>
            <person name="Shiraki T."/>
            <person name="Suzuki S."/>
            <person name="Tagami M."/>
            <person name="Waki K."/>
            <person name="Watahiki A."/>
            <person name="Okamura-Oho Y."/>
            <person name="Suzuki H."/>
            <person name="Kawai J."/>
            <person name="Hayashizaki Y."/>
        </authorList>
    </citation>
    <scope>NUCLEOTIDE SEQUENCE [LARGE SCALE MRNA] OF 151-666 (ISOFORM 1)</scope>
    <source>
        <strain>C57BL/6J</strain>
        <tissue>Colon</tissue>
    </source>
</reference>
<reference key="5">
    <citation type="journal article" date="2008" name="Cancer Res.">
        <title>Tnk1/Kos1 knockout mice develop spontaneous tumors.</title>
        <authorList>
            <person name="Hoare S."/>
            <person name="Hoare K."/>
            <person name="Reinhard M.K."/>
            <person name="Lee Y.J."/>
            <person name="Oh S.P."/>
            <person name="May W.S. Jr."/>
        </authorList>
    </citation>
    <scope>FUNCTION</scope>
    <scope>DISRUPTION PHENOTYPE</scope>
</reference>
<reference key="6">
    <citation type="journal article" date="2010" name="Cell">
        <title>A tissue-specific atlas of mouse protein phosphorylation and expression.</title>
        <authorList>
            <person name="Huttlin E.L."/>
            <person name="Jedrychowski M.P."/>
            <person name="Elias J.E."/>
            <person name="Goswami T."/>
            <person name="Rad R."/>
            <person name="Beausoleil S.A."/>
            <person name="Villen J."/>
            <person name="Haas W."/>
            <person name="Sowa M.E."/>
            <person name="Gygi S.P."/>
        </authorList>
    </citation>
    <scope>PHOSPHORYLATION [LARGE SCALE ANALYSIS] AT SER-498</scope>
    <scope>IDENTIFICATION BY MASS SPECTROMETRY [LARGE SCALE ANALYSIS]</scope>
    <source>
        <tissue>Kidney</tissue>
    </source>
</reference>
<feature type="chain" id="PRO_0000088174" description="Non-receptor tyrosine-protein kinase TNK1">
    <location>
        <begin position="1"/>
        <end position="666"/>
    </location>
</feature>
<feature type="domain" description="Protein kinase" evidence="4">
    <location>
        <begin position="116"/>
        <end position="383"/>
    </location>
</feature>
<feature type="domain" description="SH3" evidence="5">
    <location>
        <begin position="381"/>
        <end position="441"/>
    </location>
</feature>
<feature type="region of interest" description="Disordered" evidence="7">
    <location>
        <begin position="442"/>
        <end position="589"/>
    </location>
</feature>
<feature type="compositionally biased region" description="Basic and acidic residues" evidence="7">
    <location>
        <begin position="457"/>
        <end position="473"/>
    </location>
</feature>
<feature type="compositionally biased region" description="Pro residues" evidence="7">
    <location>
        <begin position="531"/>
        <end position="544"/>
    </location>
</feature>
<feature type="active site" description="Proton acceptor" evidence="2 4 6">
    <location>
        <position position="245"/>
    </location>
</feature>
<feature type="binding site" evidence="2 4">
    <location>
        <begin position="122"/>
        <end position="130"/>
    </location>
    <ligand>
        <name>ATP</name>
        <dbReference type="ChEBI" id="CHEBI:30616"/>
    </ligand>
</feature>
<feature type="binding site" evidence="2 4">
    <location>
        <position position="148"/>
    </location>
    <ligand>
        <name>ATP</name>
        <dbReference type="ChEBI" id="CHEBI:30616"/>
    </ligand>
</feature>
<feature type="modified residue" description="Phosphoserine" evidence="3">
    <location>
        <position position="96"/>
    </location>
</feature>
<feature type="modified residue" description="Phosphoserine" evidence="3">
    <location>
        <position position="255"/>
    </location>
</feature>
<feature type="modified residue" description="Phosphoserine" evidence="19">
    <location>
        <position position="498"/>
    </location>
</feature>
<feature type="modified residue" description="Phosphothreonine" evidence="3">
    <location>
        <position position="510"/>
    </location>
</feature>
<feature type="modified residue" description="Phosphoserine" evidence="3">
    <location>
        <position position="515"/>
    </location>
</feature>
<feature type="modified residue" description="Phosphoserine" evidence="3">
    <location>
        <position position="582"/>
    </location>
</feature>
<feature type="splice variant" id="VSP_051664" description="In isoform 2." evidence="11">
    <original>AWLSEGRCVREVTEPGALRMEPGDPITIIEGSLDTATWKGQNGRTLKVGNFPAS</original>
    <variation>VRIPNSPYTHIAFLPCILSPSVPCRRQTRLGAWAGIWNSAQNQVQSLPAGSAEP</variation>
    <location>
        <begin position="381"/>
        <end position="434"/>
    </location>
</feature>
<feature type="splice variant" id="VSP_051665" description="In isoform 2." evidence="11">
    <location>
        <begin position="435"/>
        <end position="666"/>
    </location>
</feature>
<feature type="mutagenesis site" description="Loss of autophosphorylation." evidence="8">
    <original>K</original>
    <variation>A</variation>
    <location>
        <position position="148"/>
    </location>
</feature>
<feature type="sequence conflict" description="In Ref. 2; AAK35164." evidence="12" ref="2">
    <original>L</original>
    <variation>V</variation>
    <location>
        <position position="46"/>
    </location>
</feature>
<feature type="sequence conflict" description="In Ref. 2; AAK35164." evidence="12" ref="2">
    <original>L</original>
    <variation>I</variation>
    <location>
        <position position="59"/>
    </location>
</feature>
<feature type="sequence conflict" description="In Ref. 3; AAH29623/AAH55303." evidence="12" ref="3">
    <original>A</original>
    <variation>T</variation>
    <location>
        <position position="206"/>
    </location>
</feature>
<feature type="sequence conflict" description="In Ref. 2; AAK35164." evidence="12" ref="2">
    <original>P</original>
    <variation>S</variation>
    <location>
        <position position="534"/>
    </location>
</feature>
<evidence type="ECO:0000250" key="1"/>
<evidence type="ECO:0000250" key="2">
    <source>
        <dbReference type="UniProtKB" id="P12931"/>
    </source>
</evidence>
<evidence type="ECO:0000250" key="3">
    <source>
        <dbReference type="UniProtKB" id="Q13470"/>
    </source>
</evidence>
<evidence type="ECO:0000255" key="4">
    <source>
        <dbReference type="PROSITE-ProRule" id="PRU00159"/>
    </source>
</evidence>
<evidence type="ECO:0000255" key="5">
    <source>
        <dbReference type="PROSITE-ProRule" id="PRU00192"/>
    </source>
</evidence>
<evidence type="ECO:0000255" key="6">
    <source>
        <dbReference type="PROSITE-ProRule" id="PRU10028"/>
    </source>
</evidence>
<evidence type="ECO:0000256" key="7">
    <source>
        <dbReference type="SAM" id="MobiDB-lite"/>
    </source>
</evidence>
<evidence type="ECO:0000269" key="8">
    <source>
    </source>
</evidence>
<evidence type="ECO:0000269" key="9">
    <source>
    </source>
</evidence>
<evidence type="ECO:0000269" key="10">
    <source ref="2"/>
</evidence>
<evidence type="ECO:0000303" key="11">
    <source>
    </source>
</evidence>
<evidence type="ECO:0000305" key="12"/>
<evidence type="ECO:0000312" key="13">
    <source>
        <dbReference type="EMBL" id="AAH29623.1"/>
    </source>
</evidence>
<evidence type="ECO:0000312" key="14">
    <source>
        <dbReference type="EMBL" id="AAH55303.1"/>
    </source>
</evidence>
<evidence type="ECO:0000312" key="15">
    <source>
        <dbReference type="EMBL" id="AAK35164.1"/>
    </source>
</evidence>
<evidence type="ECO:0000312" key="16">
    <source>
        <dbReference type="EMBL" id="AAL09412.1"/>
    </source>
</evidence>
<evidence type="ECO:0000312" key="17">
    <source>
        <dbReference type="EMBL" id="AAL09413.1"/>
    </source>
</evidence>
<evidence type="ECO:0000312" key="18">
    <source>
        <dbReference type="MGI" id="MGI:1930958"/>
    </source>
</evidence>
<evidence type="ECO:0007744" key="19">
    <source>
    </source>
</evidence>
<protein>
    <recommendedName>
        <fullName>Non-receptor tyrosine-protein kinase TNK1</fullName>
        <ecNumber>2.7.10.2</ecNumber>
    </recommendedName>
    <alternativeName>
        <fullName>Kinase of embryonic stem cells</fullName>
    </alternativeName>
</protein>
<keyword id="KW-0025">Alternative splicing</keyword>
<keyword id="KW-0067">ATP-binding</keyword>
<keyword id="KW-0963">Cytoplasm</keyword>
<keyword id="KW-0418">Kinase</keyword>
<keyword id="KW-0472">Membrane</keyword>
<keyword id="KW-0547">Nucleotide-binding</keyword>
<keyword id="KW-0597">Phosphoprotein</keyword>
<keyword id="KW-1185">Reference proteome</keyword>
<keyword id="KW-0728">SH3 domain</keyword>
<keyword id="KW-0808">Transferase</keyword>
<keyword id="KW-0829">Tyrosine-protein kinase</keyword>
<dbReference type="EC" id="2.7.10.2"/>
<dbReference type="EMBL" id="AF307745">
    <property type="protein sequence ID" value="AAL09412.1"/>
    <property type="molecule type" value="Genomic_DNA"/>
</dbReference>
<dbReference type="EMBL" id="AF307746">
    <property type="protein sequence ID" value="AAL09413.1"/>
    <property type="molecule type" value="mRNA"/>
</dbReference>
<dbReference type="EMBL" id="AF332512">
    <property type="protein sequence ID" value="AAK35164.1"/>
    <property type="molecule type" value="mRNA"/>
</dbReference>
<dbReference type="EMBL" id="BC029623">
    <property type="protein sequence ID" value="AAH29623.1"/>
    <property type="molecule type" value="mRNA"/>
</dbReference>
<dbReference type="EMBL" id="BC055303">
    <property type="protein sequence ID" value="AAH55303.1"/>
    <property type="molecule type" value="mRNA"/>
</dbReference>
<dbReference type="EMBL" id="AK033440">
    <property type="protein sequence ID" value="BAC28288.1"/>
    <property type="molecule type" value="mRNA"/>
</dbReference>
<dbReference type="CCDS" id="CCDS24917.1">
    <molecule id="Q99ML2-1"/>
</dbReference>
<dbReference type="RefSeq" id="NP_114086.3">
    <molecule id="Q99ML2-1"/>
    <property type="nucleotide sequence ID" value="NM_031880.3"/>
</dbReference>
<dbReference type="RefSeq" id="XP_006534617.1">
    <molecule id="Q99ML2-1"/>
    <property type="nucleotide sequence ID" value="XM_006534554.3"/>
</dbReference>
<dbReference type="SMR" id="Q99ML2"/>
<dbReference type="FunCoup" id="Q99ML2">
    <property type="interactions" value="59"/>
</dbReference>
<dbReference type="STRING" id="10090.ENSMUSP00000001626"/>
<dbReference type="GlyGen" id="Q99ML2">
    <property type="glycosylation" value="2 sites"/>
</dbReference>
<dbReference type="iPTMnet" id="Q99ML2"/>
<dbReference type="PhosphoSitePlus" id="Q99ML2"/>
<dbReference type="jPOST" id="Q99ML2"/>
<dbReference type="PaxDb" id="10090-ENSMUSP00000001626"/>
<dbReference type="ProteomicsDB" id="259477">
    <molecule id="Q99ML2-1"/>
</dbReference>
<dbReference type="ProteomicsDB" id="259478">
    <molecule id="Q99ML2-2"/>
</dbReference>
<dbReference type="Antibodypedia" id="6049">
    <property type="antibodies" value="361 antibodies from 34 providers"/>
</dbReference>
<dbReference type="DNASU" id="83813"/>
<dbReference type="Ensembl" id="ENSMUST00000001626.10">
    <molecule id="Q99ML2-1"/>
    <property type="protein sequence ID" value="ENSMUSP00000001626.4"/>
    <property type="gene ID" value="ENSMUSG00000001583.14"/>
</dbReference>
<dbReference type="Ensembl" id="ENSMUST00000108626.8">
    <molecule id="Q99ML2-2"/>
    <property type="protein sequence ID" value="ENSMUSP00000104266.2"/>
    <property type="gene ID" value="ENSMUSG00000001583.14"/>
</dbReference>
<dbReference type="GeneID" id="83813"/>
<dbReference type="KEGG" id="mmu:83813"/>
<dbReference type="UCSC" id="uc007jsb.2">
    <molecule id="Q99ML2-1"/>
    <property type="organism name" value="mouse"/>
</dbReference>
<dbReference type="UCSC" id="uc007jsc.2">
    <molecule id="Q99ML2-2"/>
    <property type="organism name" value="mouse"/>
</dbReference>
<dbReference type="AGR" id="MGI:1930958"/>
<dbReference type="CTD" id="8711"/>
<dbReference type="MGI" id="MGI:1930958">
    <property type="gene designation" value="Tnk1"/>
</dbReference>
<dbReference type="VEuPathDB" id="HostDB:ENSMUSG00000001583"/>
<dbReference type="eggNOG" id="KOG0199">
    <property type="taxonomic scope" value="Eukaryota"/>
</dbReference>
<dbReference type="GeneTree" id="ENSGT00940000162159"/>
<dbReference type="HOGENOM" id="CLU_000288_7_39_1"/>
<dbReference type="InParanoid" id="Q99ML2"/>
<dbReference type="OMA" id="GQMPWAG"/>
<dbReference type="OrthoDB" id="68394at9989"/>
<dbReference type="TreeFam" id="TF316643"/>
<dbReference type="BioGRID-ORCS" id="83813">
    <property type="hits" value="5 hits in 79 CRISPR screens"/>
</dbReference>
<dbReference type="ChiTaRS" id="Tnk1">
    <property type="organism name" value="mouse"/>
</dbReference>
<dbReference type="PRO" id="PR:Q99ML2"/>
<dbReference type="Proteomes" id="UP000000589">
    <property type="component" value="Chromosome 11"/>
</dbReference>
<dbReference type="RNAct" id="Q99ML2">
    <property type="molecule type" value="protein"/>
</dbReference>
<dbReference type="Bgee" id="ENSMUSG00000001583">
    <property type="expression patterns" value="Expressed in small intestine Peyer's patch and 106 other cell types or tissues"/>
</dbReference>
<dbReference type="ExpressionAtlas" id="Q99ML2">
    <property type="expression patterns" value="baseline and differential"/>
</dbReference>
<dbReference type="GO" id="GO:0005829">
    <property type="term" value="C:cytosol"/>
    <property type="evidence" value="ECO:0000314"/>
    <property type="project" value="UniProtKB"/>
</dbReference>
<dbReference type="GO" id="GO:0016020">
    <property type="term" value="C:membrane"/>
    <property type="evidence" value="ECO:0007669"/>
    <property type="project" value="UniProtKB-SubCell"/>
</dbReference>
<dbReference type="GO" id="GO:0005524">
    <property type="term" value="F:ATP binding"/>
    <property type="evidence" value="ECO:0000315"/>
    <property type="project" value="UniProtKB"/>
</dbReference>
<dbReference type="GO" id="GO:0004715">
    <property type="term" value="F:non-membrane spanning protein tyrosine kinase activity"/>
    <property type="evidence" value="ECO:0000314"/>
    <property type="project" value="UniProtKB"/>
</dbReference>
<dbReference type="GO" id="GO:0030308">
    <property type="term" value="P:negative regulation of cell growth"/>
    <property type="evidence" value="ECO:0000315"/>
    <property type="project" value="UniProtKB"/>
</dbReference>
<dbReference type="GO" id="GO:0046580">
    <property type="term" value="P:negative regulation of Ras protein signal transduction"/>
    <property type="evidence" value="ECO:0000315"/>
    <property type="project" value="UniProtKB"/>
</dbReference>
<dbReference type="GO" id="GO:0046777">
    <property type="term" value="P:protein autophosphorylation"/>
    <property type="evidence" value="ECO:0000314"/>
    <property type="project" value="UniProtKB"/>
</dbReference>
<dbReference type="CDD" id="cd09539">
    <property type="entry name" value="SAM_TNK-like"/>
    <property type="match status" value="1"/>
</dbReference>
<dbReference type="FunFam" id="2.30.30.40:FF:000243">
    <property type="entry name" value="Non-receptor tyrosine-protein kinase TNK1 isoform X1"/>
    <property type="match status" value="1"/>
</dbReference>
<dbReference type="FunFam" id="1.10.510.10:FF:000619">
    <property type="entry name" value="non-receptor tyrosine-protein kinase TNK1 isoform X1"/>
    <property type="match status" value="1"/>
</dbReference>
<dbReference type="FunFam" id="3.30.200.20:FF:000400">
    <property type="entry name" value="Tyrosine kinase non receptor 1"/>
    <property type="match status" value="1"/>
</dbReference>
<dbReference type="Gene3D" id="3.30.200.20">
    <property type="entry name" value="Phosphorylase Kinase, domain 1"/>
    <property type="match status" value="1"/>
</dbReference>
<dbReference type="Gene3D" id="2.30.30.40">
    <property type="entry name" value="SH3 Domains"/>
    <property type="match status" value="1"/>
</dbReference>
<dbReference type="Gene3D" id="1.10.510.10">
    <property type="entry name" value="Transferase(Phosphotransferase) domain 1"/>
    <property type="match status" value="1"/>
</dbReference>
<dbReference type="InterPro" id="IPR055175">
    <property type="entry name" value="ACK/TNK-like_SAM"/>
</dbReference>
<dbReference type="InterPro" id="IPR011009">
    <property type="entry name" value="Kinase-like_dom_sf"/>
</dbReference>
<dbReference type="InterPro" id="IPR050198">
    <property type="entry name" value="Non-receptor_tyrosine_kinases"/>
</dbReference>
<dbReference type="InterPro" id="IPR000719">
    <property type="entry name" value="Prot_kinase_dom"/>
</dbReference>
<dbReference type="InterPro" id="IPR017441">
    <property type="entry name" value="Protein_kinase_ATP_BS"/>
</dbReference>
<dbReference type="InterPro" id="IPR001245">
    <property type="entry name" value="Ser-Thr/Tyr_kinase_cat_dom"/>
</dbReference>
<dbReference type="InterPro" id="IPR036028">
    <property type="entry name" value="SH3-like_dom_sf"/>
</dbReference>
<dbReference type="InterPro" id="IPR001452">
    <property type="entry name" value="SH3_domain"/>
</dbReference>
<dbReference type="InterPro" id="IPR049587">
    <property type="entry name" value="TNK-like_SAM"/>
</dbReference>
<dbReference type="InterPro" id="IPR008266">
    <property type="entry name" value="Tyr_kinase_AS"/>
</dbReference>
<dbReference type="InterPro" id="IPR020635">
    <property type="entry name" value="Tyr_kinase_cat_dom"/>
</dbReference>
<dbReference type="PANTHER" id="PTHR24418">
    <property type="entry name" value="TYROSINE-PROTEIN KINASE"/>
    <property type="match status" value="1"/>
</dbReference>
<dbReference type="Pfam" id="PF07714">
    <property type="entry name" value="PK_Tyr_Ser-Thr"/>
    <property type="match status" value="1"/>
</dbReference>
<dbReference type="Pfam" id="PF22931">
    <property type="entry name" value="SAM_TNK"/>
    <property type="match status" value="1"/>
</dbReference>
<dbReference type="PRINTS" id="PR00109">
    <property type="entry name" value="TYRKINASE"/>
</dbReference>
<dbReference type="SMART" id="SM00219">
    <property type="entry name" value="TyrKc"/>
    <property type="match status" value="1"/>
</dbReference>
<dbReference type="SUPFAM" id="SSF56112">
    <property type="entry name" value="Protein kinase-like (PK-like)"/>
    <property type="match status" value="1"/>
</dbReference>
<dbReference type="SUPFAM" id="SSF50044">
    <property type="entry name" value="SH3-domain"/>
    <property type="match status" value="1"/>
</dbReference>
<dbReference type="PROSITE" id="PS00107">
    <property type="entry name" value="PROTEIN_KINASE_ATP"/>
    <property type="match status" value="1"/>
</dbReference>
<dbReference type="PROSITE" id="PS50011">
    <property type="entry name" value="PROTEIN_KINASE_DOM"/>
    <property type="match status" value="1"/>
</dbReference>
<dbReference type="PROSITE" id="PS00109">
    <property type="entry name" value="PROTEIN_KINASE_TYR"/>
    <property type="match status" value="1"/>
</dbReference>
<dbReference type="PROSITE" id="PS50002">
    <property type="entry name" value="SH3"/>
    <property type="match status" value="1"/>
</dbReference>
<gene>
    <name evidence="15" type="primary">Tnk1</name>
    <name evidence="18" type="synonym">Kos1</name>
</gene>
<name>TNK1_MOUSE</name>
<accession>Q99ML2</accession>
<accession>Q8CCC4</accession>
<accession>Q8K0X9</accession>
<accession>Q91V11</accession>
<sequence length="666" mass="73099">MLPEASSLWLLRLLRDVQLAQFYRPILEELNVTRPEHFDFVRPEDLDNIGMGRPAQRRLNEALKRYRSGVKSKNWVYKILGGFAPEQKEIPPRSDSPLCFHEPEGGLKCLIPEGAVRRGELLGSGCFGVVHRGLWTLPSGQSIPVAVKSLRVGPEGPMGTELGDFLREVSVMMKLEHPHVLRLHGLVLGQPLQMVMELAPLGSLHARLTAPAPTPPLPVALLCLFLRQLAGAMAYLGSCGLVHRDLATRNLLLASPRMIKVADFGLVRPLGGARGRYVMGGPRPIPYAWCAPESLRQGAFSSASDVWMFGVTLWEMFSGGEEPWAGVPPYLILQRLEKDRARLPKPPLCSRALYSLALRCWAPHPADRPSFSNLEGLLQEAWLSEGRCVREVTEPGALRMEPGDPITIIEGSLDTATWKGQNGRTLKVGNFPASAVTLADLGGSPVTHPAHRGSPAHGEKCRGGTDGDREKATLQDLPPARSHRTKMPLQRMRGISKSLESVLSLGPRPTGGGSSPPELRRTRAMPQRLPDLPPRPPDLPPRPPIICNSSQPTQPHKARPKRESSHNHRTGAPGASKATVPSGGPLSDPEWQRKVVEVELSVHGVTYQECQVALRTTGGDVASAIRNLKVDQLFHLSNRSRADCRRILEHHQWDLSAASRYILARS</sequence>
<organism>
    <name type="scientific">Mus musculus</name>
    <name type="common">Mouse</name>
    <dbReference type="NCBI Taxonomy" id="10090"/>
    <lineage>
        <taxon>Eukaryota</taxon>
        <taxon>Metazoa</taxon>
        <taxon>Chordata</taxon>
        <taxon>Craniata</taxon>
        <taxon>Vertebrata</taxon>
        <taxon>Euteleostomi</taxon>
        <taxon>Mammalia</taxon>
        <taxon>Eutheria</taxon>
        <taxon>Euarchontoglires</taxon>
        <taxon>Glires</taxon>
        <taxon>Rodentia</taxon>
        <taxon>Myomorpha</taxon>
        <taxon>Muroidea</taxon>
        <taxon>Muridae</taxon>
        <taxon>Murinae</taxon>
        <taxon>Mus</taxon>
        <taxon>Mus</taxon>
    </lineage>
</organism>